<sequence>MASRLLRGVGALASQALRARGPNGVSVVRSMASGGGVPTDEEQATGLEREVMLAARKGQDPYNILAPKATSGTKEDPNLVPSITNKRIVGCICEEDNSTVIWFWLHKGEAQRCPSCGTHYKLVPHQLAH</sequence>
<proteinExistence type="evidence at protein level"/>
<evidence type="ECO:0000250" key="1">
    <source>
        <dbReference type="UniProtKB" id="P04037"/>
    </source>
</evidence>
<evidence type="ECO:0000250" key="2">
    <source>
        <dbReference type="UniProtKB" id="P19536"/>
    </source>
</evidence>
<evidence type="ECO:0000269" key="3">
    <source>
    </source>
</evidence>
<evidence type="ECO:0000269" key="4">
    <source>
    </source>
</evidence>
<evidence type="ECO:0000269" key="5">
    <source>
    </source>
</evidence>
<evidence type="ECO:0000269" key="6">
    <source>
    </source>
</evidence>
<evidence type="ECO:0000269" key="7">
    <source>
    </source>
</evidence>
<evidence type="ECO:0000269" key="8">
    <source>
    </source>
</evidence>
<evidence type="ECO:0000269" key="9">
    <source>
    </source>
</evidence>
<evidence type="ECO:0000269" key="10">
    <source>
    </source>
</evidence>
<evidence type="ECO:0000305" key="11"/>
<evidence type="ECO:0007829" key="12">
    <source>
        <dbReference type="PDB" id="1OCC"/>
    </source>
</evidence>
<evidence type="ECO:0007829" key="13">
    <source>
        <dbReference type="PDB" id="1OCZ"/>
    </source>
</evidence>
<evidence type="ECO:0007829" key="14">
    <source>
        <dbReference type="PDB" id="5W97"/>
    </source>
</evidence>
<evidence type="ECO:0007829" key="15">
    <source>
        <dbReference type="PDB" id="7COH"/>
    </source>
</evidence>
<feature type="transit peptide" description="Mitochondrion" evidence="7 9">
    <location>
        <begin position="1"/>
        <end position="31"/>
    </location>
</feature>
<feature type="chain" id="PRO_0000197028" description="Cytochrome c oxidase subunit 5B, mitochondrial">
    <location>
        <begin position="32"/>
        <end position="129"/>
    </location>
</feature>
<feature type="binding site" evidence="3 5 10">
    <location>
        <position position="91"/>
    </location>
    <ligand>
        <name>Zn(2+)</name>
        <dbReference type="ChEBI" id="CHEBI:29105"/>
    </ligand>
</feature>
<feature type="binding site" evidence="3 5 10">
    <location>
        <position position="93"/>
    </location>
    <ligand>
        <name>Zn(2+)</name>
        <dbReference type="ChEBI" id="CHEBI:29105"/>
    </ligand>
</feature>
<feature type="binding site" evidence="3 5 10">
    <location>
        <position position="113"/>
    </location>
    <ligand>
        <name>Zn(2+)</name>
        <dbReference type="ChEBI" id="CHEBI:29105"/>
    </ligand>
</feature>
<feature type="binding site" evidence="3 5 10">
    <location>
        <position position="116"/>
    </location>
    <ligand>
        <name>Zn(2+)</name>
        <dbReference type="ChEBI" id="CHEBI:29105"/>
    </ligand>
</feature>
<feature type="modified residue" description="N6-acetyllysine" evidence="2">
    <location>
        <position position="68"/>
    </location>
</feature>
<feature type="modified residue" description="N6-acetyllysine" evidence="2">
    <location>
        <position position="86"/>
    </location>
</feature>
<feature type="modified residue" description="N6-acetyllysine" evidence="2">
    <location>
        <position position="121"/>
    </location>
</feature>
<feature type="helix" evidence="15">
    <location>
        <begin position="40"/>
        <end position="43"/>
    </location>
</feature>
<feature type="helix" evidence="15">
    <location>
        <begin position="46"/>
        <end position="56"/>
    </location>
</feature>
<feature type="strand" evidence="15">
    <location>
        <begin position="74"/>
        <end position="76"/>
    </location>
</feature>
<feature type="strand" evidence="15">
    <location>
        <begin position="78"/>
        <end position="81"/>
    </location>
</feature>
<feature type="strand" evidence="15">
    <location>
        <begin position="83"/>
        <end position="91"/>
    </location>
</feature>
<feature type="strand" evidence="13">
    <location>
        <begin position="94"/>
        <end position="96"/>
    </location>
</feature>
<feature type="strand" evidence="15">
    <location>
        <begin position="101"/>
        <end position="109"/>
    </location>
</feature>
<feature type="strand" evidence="12">
    <location>
        <begin position="111"/>
        <end position="113"/>
    </location>
</feature>
<feature type="turn" evidence="15">
    <location>
        <begin position="114"/>
        <end position="116"/>
    </location>
</feature>
<feature type="strand" evidence="15">
    <location>
        <begin position="119"/>
        <end position="123"/>
    </location>
</feature>
<feature type="strand" evidence="14">
    <location>
        <begin position="125"/>
        <end position="127"/>
    </location>
</feature>
<dbReference type="EMBL" id="BC102579">
    <property type="protein sequence ID" value="AAI02580.1"/>
    <property type="molecule type" value="mRNA"/>
</dbReference>
<dbReference type="EMBL" id="BC147855">
    <property type="protein sequence ID" value="AAI47856.1"/>
    <property type="molecule type" value="mRNA"/>
</dbReference>
<dbReference type="EMBL" id="M19962">
    <property type="protein sequence ID" value="AAA30465.1"/>
    <property type="status" value="ALT_INIT"/>
    <property type="molecule type" value="mRNA"/>
</dbReference>
<dbReference type="PIR" id="A00495">
    <property type="entry name" value="OGBO6A"/>
</dbReference>
<dbReference type="RefSeq" id="NP_001029218.1">
    <property type="nucleotide sequence ID" value="NM_001034046.2"/>
</dbReference>
<dbReference type="PDB" id="1OCC">
    <property type="method" value="X-ray"/>
    <property type="resolution" value="2.80 A"/>
    <property type="chains" value="F/S=32-129"/>
</dbReference>
<dbReference type="PDB" id="1OCO">
    <property type="method" value="X-ray"/>
    <property type="resolution" value="2.80 A"/>
    <property type="chains" value="F/S=32-129"/>
</dbReference>
<dbReference type="PDB" id="1OCR">
    <property type="method" value="X-ray"/>
    <property type="resolution" value="2.35 A"/>
    <property type="chains" value="F/S=32-129"/>
</dbReference>
<dbReference type="PDB" id="1OCZ">
    <property type="method" value="X-ray"/>
    <property type="resolution" value="2.90 A"/>
    <property type="chains" value="F/S=32-129"/>
</dbReference>
<dbReference type="PDB" id="1V54">
    <property type="method" value="X-ray"/>
    <property type="resolution" value="1.80 A"/>
    <property type="chains" value="F/S=32-129"/>
</dbReference>
<dbReference type="PDB" id="1V55">
    <property type="method" value="X-ray"/>
    <property type="resolution" value="1.90 A"/>
    <property type="chains" value="F/S=32-129"/>
</dbReference>
<dbReference type="PDB" id="2DYR">
    <property type="method" value="X-ray"/>
    <property type="resolution" value="1.80 A"/>
    <property type="chains" value="F/S=32-129"/>
</dbReference>
<dbReference type="PDB" id="2DYS">
    <property type="method" value="X-ray"/>
    <property type="resolution" value="2.20 A"/>
    <property type="chains" value="F/S=32-129"/>
</dbReference>
<dbReference type="PDB" id="2EIJ">
    <property type="method" value="X-ray"/>
    <property type="resolution" value="1.90 A"/>
    <property type="chains" value="F/S=32-129"/>
</dbReference>
<dbReference type="PDB" id="2EIK">
    <property type="method" value="X-ray"/>
    <property type="resolution" value="2.10 A"/>
    <property type="chains" value="F/S=32-129"/>
</dbReference>
<dbReference type="PDB" id="2EIL">
    <property type="method" value="X-ray"/>
    <property type="resolution" value="2.10 A"/>
    <property type="chains" value="F/S=32-129"/>
</dbReference>
<dbReference type="PDB" id="2EIM">
    <property type="method" value="X-ray"/>
    <property type="resolution" value="2.60 A"/>
    <property type="chains" value="F/S=32-129"/>
</dbReference>
<dbReference type="PDB" id="2EIN">
    <property type="method" value="X-ray"/>
    <property type="resolution" value="2.70 A"/>
    <property type="chains" value="F/S=32-129"/>
</dbReference>
<dbReference type="PDB" id="2OCC">
    <property type="method" value="X-ray"/>
    <property type="resolution" value="2.30 A"/>
    <property type="chains" value="F/S=32-129"/>
</dbReference>
<dbReference type="PDB" id="2Y69">
    <property type="method" value="X-ray"/>
    <property type="resolution" value="1.95 A"/>
    <property type="chains" value="F/S=1-129"/>
</dbReference>
<dbReference type="PDB" id="2YBB">
    <property type="method" value="EM"/>
    <property type="resolution" value="19.00 A"/>
    <property type="chains" value="Q=32-129"/>
</dbReference>
<dbReference type="PDB" id="2ZXW">
    <property type="method" value="X-ray"/>
    <property type="resolution" value="2.50 A"/>
    <property type="chains" value="F/S=32-129"/>
</dbReference>
<dbReference type="PDB" id="3ABK">
    <property type="method" value="X-ray"/>
    <property type="resolution" value="2.00 A"/>
    <property type="chains" value="F/S=32-129"/>
</dbReference>
<dbReference type="PDB" id="3ABL">
    <property type="method" value="X-ray"/>
    <property type="resolution" value="2.10 A"/>
    <property type="chains" value="F/S=32-129"/>
</dbReference>
<dbReference type="PDB" id="3ABM">
    <property type="method" value="X-ray"/>
    <property type="resolution" value="1.95 A"/>
    <property type="chains" value="F/S=32-129"/>
</dbReference>
<dbReference type="PDB" id="3AG1">
    <property type="method" value="X-ray"/>
    <property type="resolution" value="2.20 A"/>
    <property type="chains" value="F/S=32-129"/>
</dbReference>
<dbReference type="PDB" id="3AG2">
    <property type="method" value="X-ray"/>
    <property type="resolution" value="1.80 A"/>
    <property type="chains" value="F/S=32-129"/>
</dbReference>
<dbReference type="PDB" id="3AG3">
    <property type="method" value="X-ray"/>
    <property type="resolution" value="1.80 A"/>
    <property type="chains" value="F/S=32-129"/>
</dbReference>
<dbReference type="PDB" id="3AG4">
    <property type="method" value="X-ray"/>
    <property type="resolution" value="2.05 A"/>
    <property type="chains" value="F/S=32-129"/>
</dbReference>
<dbReference type="PDB" id="3ASN">
    <property type="method" value="X-ray"/>
    <property type="resolution" value="3.00 A"/>
    <property type="chains" value="F/S=32-129"/>
</dbReference>
<dbReference type="PDB" id="3ASO">
    <property type="method" value="X-ray"/>
    <property type="resolution" value="2.30 A"/>
    <property type="chains" value="F/S=32-129"/>
</dbReference>
<dbReference type="PDB" id="3WG7">
    <property type="method" value="X-ray"/>
    <property type="resolution" value="1.90 A"/>
    <property type="chains" value="F/S=32-129"/>
</dbReference>
<dbReference type="PDB" id="3X2Q">
    <property type="method" value="X-ray"/>
    <property type="resolution" value="2.00 A"/>
    <property type="chains" value="F/S=32-129"/>
</dbReference>
<dbReference type="PDB" id="5B1A">
    <property type="method" value="X-ray"/>
    <property type="resolution" value="1.50 A"/>
    <property type="chains" value="F/S=32-129"/>
</dbReference>
<dbReference type="PDB" id="5B1B">
    <property type="method" value="X-ray"/>
    <property type="resolution" value="1.60 A"/>
    <property type="chains" value="F/S=32-129"/>
</dbReference>
<dbReference type="PDB" id="5B3S">
    <property type="method" value="X-ray"/>
    <property type="resolution" value="1.68 A"/>
    <property type="chains" value="F/S=32-129"/>
</dbReference>
<dbReference type="PDB" id="5GPN">
    <property type="method" value="EM"/>
    <property type="resolution" value="5.40 A"/>
    <property type="chains" value="3=32-129"/>
</dbReference>
<dbReference type="PDB" id="5IY5">
    <property type="method" value="X-ray"/>
    <property type="resolution" value="2.00 A"/>
    <property type="chains" value="F/S=32-129"/>
</dbReference>
<dbReference type="PDB" id="5LUF">
    <property type="method" value="EM"/>
    <property type="resolution" value="9.10 A"/>
    <property type="chains" value="3=32-129"/>
</dbReference>
<dbReference type="PDB" id="5W97">
    <property type="method" value="X-ray"/>
    <property type="resolution" value="2.30 A"/>
    <property type="chains" value="F/f=32-129"/>
</dbReference>
<dbReference type="PDB" id="5WAU">
    <property type="method" value="X-ray"/>
    <property type="resolution" value="1.95 A"/>
    <property type="chains" value="F/f=32-129"/>
</dbReference>
<dbReference type="PDB" id="5X19">
    <property type="method" value="X-ray"/>
    <property type="resolution" value="2.20 A"/>
    <property type="chains" value="F/S=32-129"/>
</dbReference>
<dbReference type="PDB" id="5X1B">
    <property type="method" value="X-ray"/>
    <property type="resolution" value="2.40 A"/>
    <property type="chains" value="F/S=32-129"/>
</dbReference>
<dbReference type="PDB" id="5X1F">
    <property type="method" value="X-ray"/>
    <property type="resolution" value="2.20 A"/>
    <property type="chains" value="F/S=32-129"/>
</dbReference>
<dbReference type="PDB" id="5XDQ">
    <property type="method" value="X-ray"/>
    <property type="resolution" value="1.77 A"/>
    <property type="chains" value="F/S=32-125"/>
</dbReference>
<dbReference type="PDB" id="5XDX">
    <property type="method" value="X-ray"/>
    <property type="resolution" value="1.99 A"/>
    <property type="chains" value="F/S=32-125"/>
</dbReference>
<dbReference type="PDB" id="5XTH">
    <property type="method" value="EM"/>
    <property type="resolution" value="3.90 A"/>
    <property type="chains" value="2=32-129"/>
</dbReference>
<dbReference type="PDB" id="5XTI">
    <property type="method" value="EM"/>
    <property type="resolution" value="17.40 A"/>
    <property type="chains" value="2/B2=32-129"/>
</dbReference>
<dbReference type="PDB" id="5Z84">
    <property type="method" value="X-ray"/>
    <property type="resolution" value="1.85 A"/>
    <property type="chains" value="F/S=32-129"/>
</dbReference>
<dbReference type="PDB" id="5Z85">
    <property type="method" value="X-ray"/>
    <property type="resolution" value="1.85 A"/>
    <property type="chains" value="F/S=32-129"/>
</dbReference>
<dbReference type="PDB" id="5Z86">
    <property type="method" value="X-ray"/>
    <property type="resolution" value="1.85 A"/>
    <property type="chains" value="F/S=32-129"/>
</dbReference>
<dbReference type="PDB" id="5ZCO">
    <property type="method" value="X-ray"/>
    <property type="resolution" value="1.90 A"/>
    <property type="chains" value="F/S=32-129"/>
</dbReference>
<dbReference type="PDB" id="5ZCP">
    <property type="method" value="X-ray"/>
    <property type="resolution" value="1.65 A"/>
    <property type="chains" value="F/S=32-129"/>
</dbReference>
<dbReference type="PDB" id="5ZCQ">
    <property type="method" value="X-ray"/>
    <property type="resolution" value="1.65 A"/>
    <property type="chains" value="F/S=32-129"/>
</dbReference>
<dbReference type="PDB" id="6J8M">
    <property type="method" value="X-ray"/>
    <property type="resolution" value="1.90 A"/>
    <property type="chains" value="F/S=32-129"/>
</dbReference>
<dbReference type="PDB" id="6JUW">
    <property type="method" value="X-ray"/>
    <property type="resolution" value="1.80 A"/>
    <property type="chains" value="F/S=32-129"/>
</dbReference>
<dbReference type="PDB" id="6JY3">
    <property type="method" value="X-ray"/>
    <property type="resolution" value="1.85 A"/>
    <property type="chains" value="F=32-129"/>
</dbReference>
<dbReference type="PDB" id="6JY4">
    <property type="method" value="X-ray"/>
    <property type="resolution" value="1.95 A"/>
    <property type="chains" value="F=32-129"/>
</dbReference>
<dbReference type="PDB" id="6NKN">
    <property type="method" value="X-ray"/>
    <property type="resolution" value="2.50 A"/>
    <property type="chains" value="F/S=32-129"/>
</dbReference>
<dbReference type="PDB" id="6NMF">
    <property type="method" value="X-ray"/>
    <property type="resolution" value="2.80 A"/>
    <property type="chains" value="F/S=32-129"/>
</dbReference>
<dbReference type="PDB" id="6NMP">
    <property type="method" value="X-ray"/>
    <property type="resolution" value="2.90 A"/>
    <property type="chains" value="F/S=32-129"/>
</dbReference>
<dbReference type="PDB" id="7COH">
    <property type="method" value="X-ray"/>
    <property type="resolution" value="1.30 A"/>
    <property type="chains" value="F/S=32-129"/>
</dbReference>
<dbReference type="PDB" id="7CP5">
    <property type="method" value="X-ray"/>
    <property type="resolution" value="1.76 A"/>
    <property type="chains" value="F/S=32-125"/>
</dbReference>
<dbReference type="PDB" id="7D5W">
    <property type="method" value="X-ray"/>
    <property type="resolution" value="1.84 A"/>
    <property type="chains" value="F/S=32-125"/>
</dbReference>
<dbReference type="PDB" id="7D5X">
    <property type="method" value="X-ray"/>
    <property type="resolution" value="1.74 A"/>
    <property type="chains" value="F/S=32-125"/>
</dbReference>
<dbReference type="PDB" id="7DGQ">
    <property type="method" value="EM"/>
    <property type="resolution" value="5.00 A"/>
    <property type="chains" value="A5=1-129"/>
</dbReference>
<dbReference type="PDB" id="7DGR">
    <property type="method" value="EM"/>
    <property type="resolution" value="4.60 A"/>
    <property type="chains" value="A6=1-129"/>
</dbReference>
<dbReference type="PDB" id="7DGS">
    <property type="method" value="EM"/>
    <property type="resolution" value="7.80 A"/>
    <property type="chains" value="B2=1-129"/>
</dbReference>
<dbReference type="PDB" id="7DKF">
    <property type="method" value="EM"/>
    <property type="resolution" value="8.30 A"/>
    <property type="chains" value="F3=1-129"/>
</dbReference>
<dbReference type="PDB" id="7EV7">
    <property type="method" value="X-ray"/>
    <property type="resolution" value="1.70 A"/>
    <property type="chains" value="F/S=32-129"/>
</dbReference>
<dbReference type="PDB" id="7THU">
    <property type="method" value="X-ray"/>
    <property type="resolution" value="1.93 A"/>
    <property type="chains" value="FFF/SSS=32-129"/>
</dbReference>
<dbReference type="PDB" id="7TIE">
    <property type="method" value="X-ray"/>
    <property type="resolution" value="1.90 A"/>
    <property type="chains" value="FFF/SSS=32-129"/>
</dbReference>
<dbReference type="PDB" id="7TIH">
    <property type="method" value="X-ray"/>
    <property type="resolution" value="2.35 A"/>
    <property type="chains" value="FFF/SSS=32-129"/>
</dbReference>
<dbReference type="PDB" id="7TII">
    <property type="method" value="X-ray"/>
    <property type="resolution" value="2.45 A"/>
    <property type="chains" value="FFF/SSS=32-129"/>
</dbReference>
<dbReference type="PDB" id="7VUW">
    <property type="method" value="X-ray"/>
    <property type="resolution" value="1.60 A"/>
    <property type="chains" value="F/S=32-125"/>
</dbReference>
<dbReference type="PDB" id="7VVR">
    <property type="method" value="X-ray"/>
    <property type="resolution" value="1.65 A"/>
    <property type="chains" value="F/S=32-125"/>
</dbReference>
<dbReference type="PDB" id="7W3E">
    <property type="method" value="X-ray"/>
    <property type="resolution" value="1.45 A"/>
    <property type="chains" value="F/S=33-125"/>
</dbReference>
<dbReference type="PDB" id="7XMA">
    <property type="method" value="X-ray"/>
    <property type="resolution" value="2.20 A"/>
    <property type="chains" value="F/S=32-129"/>
</dbReference>
<dbReference type="PDB" id="7XMB">
    <property type="method" value="X-ray"/>
    <property type="resolution" value="2.20 A"/>
    <property type="chains" value="F/S=32-129"/>
</dbReference>
<dbReference type="PDB" id="7Y44">
    <property type="method" value="X-ray"/>
    <property type="resolution" value="1.90 A"/>
    <property type="chains" value="F/S=32-129"/>
</dbReference>
<dbReference type="PDB" id="7YPY">
    <property type="method" value="X-ray"/>
    <property type="resolution" value="1.50 A"/>
    <property type="chains" value="F/S=32-129"/>
</dbReference>
<dbReference type="PDB" id="8D4T">
    <property type="method" value="EM"/>
    <property type="resolution" value="3.10 A"/>
    <property type="chains" value="S=35-125"/>
</dbReference>
<dbReference type="PDB" id="8GBT">
    <property type="method" value="X-ray"/>
    <property type="resolution" value="2.80 A"/>
    <property type="chains" value="F/S=32-129"/>
</dbReference>
<dbReference type="PDB" id="8GCQ">
    <property type="method" value="X-ray"/>
    <property type="resolution" value="2.38 A"/>
    <property type="chains" value="F/S=32-129"/>
</dbReference>
<dbReference type="PDB" id="8GVM">
    <property type="method" value="X-ray"/>
    <property type="resolution" value="1.85 A"/>
    <property type="chains" value="F/S=32-129"/>
</dbReference>
<dbReference type="PDB" id="8H8R">
    <property type="method" value="X-ray"/>
    <property type="resolution" value="1.70 A"/>
    <property type="chains" value="F/S=32-129"/>
</dbReference>
<dbReference type="PDB" id="8H8S">
    <property type="method" value="X-ray"/>
    <property type="resolution" value="1.70 A"/>
    <property type="chains" value="F/S=32-129"/>
</dbReference>
<dbReference type="PDB" id="8IJN">
    <property type="method" value="X-ray"/>
    <property type="resolution" value="1.80 A"/>
    <property type="chains" value="F/S=32-129"/>
</dbReference>
<dbReference type="PDBsum" id="1OCC"/>
<dbReference type="PDBsum" id="1OCO"/>
<dbReference type="PDBsum" id="1OCR"/>
<dbReference type="PDBsum" id="1OCZ"/>
<dbReference type="PDBsum" id="1V54"/>
<dbReference type="PDBsum" id="1V55"/>
<dbReference type="PDBsum" id="2DYR"/>
<dbReference type="PDBsum" id="2DYS"/>
<dbReference type="PDBsum" id="2EIJ"/>
<dbReference type="PDBsum" id="2EIK"/>
<dbReference type="PDBsum" id="2EIL"/>
<dbReference type="PDBsum" id="2EIM"/>
<dbReference type="PDBsum" id="2EIN"/>
<dbReference type="PDBsum" id="2OCC"/>
<dbReference type="PDBsum" id="2Y69"/>
<dbReference type="PDBsum" id="2YBB"/>
<dbReference type="PDBsum" id="2ZXW"/>
<dbReference type="PDBsum" id="3ABK"/>
<dbReference type="PDBsum" id="3ABL"/>
<dbReference type="PDBsum" id="3ABM"/>
<dbReference type="PDBsum" id="3AG1"/>
<dbReference type="PDBsum" id="3AG2"/>
<dbReference type="PDBsum" id="3AG3"/>
<dbReference type="PDBsum" id="3AG4"/>
<dbReference type="PDBsum" id="3ASN"/>
<dbReference type="PDBsum" id="3ASO"/>
<dbReference type="PDBsum" id="3WG7"/>
<dbReference type="PDBsum" id="3X2Q"/>
<dbReference type="PDBsum" id="5B1A"/>
<dbReference type="PDBsum" id="5B1B"/>
<dbReference type="PDBsum" id="5B3S"/>
<dbReference type="PDBsum" id="5GPN"/>
<dbReference type="PDBsum" id="5IY5"/>
<dbReference type="PDBsum" id="5LUF"/>
<dbReference type="PDBsum" id="5W97"/>
<dbReference type="PDBsum" id="5WAU"/>
<dbReference type="PDBsum" id="5X19"/>
<dbReference type="PDBsum" id="5X1B"/>
<dbReference type="PDBsum" id="5X1F"/>
<dbReference type="PDBsum" id="5XDQ"/>
<dbReference type="PDBsum" id="5XDX"/>
<dbReference type="PDBsum" id="5XTH"/>
<dbReference type="PDBsum" id="5XTI"/>
<dbReference type="PDBsum" id="5Z84"/>
<dbReference type="PDBsum" id="5Z85"/>
<dbReference type="PDBsum" id="5Z86"/>
<dbReference type="PDBsum" id="5ZCO"/>
<dbReference type="PDBsum" id="5ZCP"/>
<dbReference type="PDBsum" id="5ZCQ"/>
<dbReference type="PDBsum" id="6J8M"/>
<dbReference type="PDBsum" id="6JUW"/>
<dbReference type="PDBsum" id="6JY3"/>
<dbReference type="PDBsum" id="6JY4"/>
<dbReference type="PDBsum" id="6NKN"/>
<dbReference type="PDBsum" id="6NMF"/>
<dbReference type="PDBsum" id="6NMP"/>
<dbReference type="PDBsum" id="7COH"/>
<dbReference type="PDBsum" id="7CP5"/>
<dbReference type="PDBsum" id="7D5W"/>
<dbReference type="PDBsum" id="7D5X"/>
<dbReference type="PDBsum" id="7DGQ"/>
<dbReference type="PDBsum" id="7DGR"/>
<dbReference type="PDBsum" id="7DGS"/>
<dbReference type="PDBsum" id="7DKF"/>
<dbReference type="PDBsum" id="7EV7"/>
<dbReference type="PDBsum" id="7THU"/>
<dbReference type="PDBsum" id="7TIE"/>
<dbReference type="PDBsum" id="7TIH"/>
<dbReference type="PDBsum" id="7TII"/>
<dbReference type="PDBsum" id="7VUW"/>
<dbReference type="PDBsum" id="7VVR"/>
<dbReference type="PDBsum" id="7W3E"/>
<dbReference type="PDBsum" id="7XMA"/>
<dbReference type="PDBsum" id="7XMB"/>
<dbReference type="PDBsum" id="7Y44"/>
<dbReference type="PDBsum" id="7YPY"/>
<dbReference type="PDBsum" id="8D4T"/>
<dbReference type="PDBsum" id="8GBT"/>
<dbReference type="PDBsum" id="8GCQ"/>
<dbReference type="PDBsum" id="8GVM"/>
<dbReference type="PDBsum" id="8H8R"/>
<dbReference type="PDBsum" id="8H8S"/>
<dbReference type="PDBsum" id="8IJN"/>
<dbReference type="EMDB" id="EMD-27196"/>
<dbReference type="EMDB" id="EMD-30673"/>
<dbReference type="EMDB" id="EMD-30674"/>
<dbReference type="EMDB" id="EMD-30675"/>
<dbReference type="EMDB" id="EMD-30706"/>
<dbReference type="EMDB" id="EMD-4107"/>
<dbReference type="EMDB" id="EMD-9534"/>
<dbReference type="SMR" id="P00428"/>
<dbReference type="CORUM" id="P00428"/>
<dbReference type="DIP" id="DIP-38985N"/>
<dbReference type="FunCoup" id="P00428">
    <property type="interactions" value="1437"/>
</dbReference>
<dbReference type="IntAct" id="P00428">
    <property type="interactions" value="3"/>
</dbReference>
<dbReference type="STRING" id="9913.ENSBTAP00000068000"/>
<dbReference type="GlyGen" id="P00428">
    <property type="glycosylation" value="1 site, 1 O-linked glycan (1 site)"/>
</dbReference>
<dbReference type="iPTMnet" id="P00428"/>
<dbReference type="PaxDb" id="9913-ENSBTAP00000024678"/>
<dbReference type="GeneID" id="287012"/>
<dbReference type="KEGG" id="bta:287012"/>
<dbReference type="CTD" id="1329"/>
<dbReference type="eggNOG" id="KOG3352">
    <property type="taxonomic scope" value="Eukaryota"/>
</dbReference>
<dbReference type="HOGENOM" id="CLU_127178_0_0_1"/>
<dbReference type="InParanoid" id="P00428"/>
<dbReference type="OrthoDB" id="10249250at2759"/>
<dbReference type="TreeFam" id="TF105063"/>
<dbReference type="BRENDA" id="7.1.1.9">
    <property type="organism ID" value="908"/>
</dbReference>
<dbReference type="UniPathway" id="UPA00705"/>
<dbReference type="EvolutionaryTrace" id="P00428"/>
<dbReference type="Proteomes" id="UP000009136">
    <property type="component" value="Unplaced"/>
</dbReference>
<dbReference type="GO" id="GO:0005743">
    <property type="term" value="C:mitochondrial inner membrane"/>
    <property type="evidence" value="ECO:0007669"/>
    <property type="project" value="UniProtKB-SubCell"/>
</dbReference>
<dbReference type="GO" id="GO:0045277">
    <property type="term" value="C:respiratory chain complex IV"/>
    <property type="evidence" value="ECO:0000314"/>
    <property type="project" value="UniProtKB"/>
</dbReference>
<dbReference type="GO" id="GO:0046872">
    <property type="term" value="F:metal ion binding"/>
    <property type="evidence" value="ECO:0007669"/>
    <property type="project" value="UniProtKB-KW"/>
</dbReference>
<dbReference type="GO" id="GO:0006123">
    <property type="term" value="P:mitochondrial electron transport, cytochrome c to oxygen"/>
    <property type="evidence" value="ECO:0000318"/>
    <property type="project" value="GO_Central"/>
</dbReference>
<dbReference type="CDD" id="cd00924">
    <property type="entry name" value="Cyt_c_Oxidase_Vb"/>
    <property type="match status" value="1"/>
</dbReference>
<dbReference type="FunFam" id="2.60.11.10:FF:000001">
    <property type="entry name" value="Cytochrome c oxidase subunit 5B, mitochondrial"/>
    <property type="match status" value="1"/>
</dbReference>
<dbReference type="Gene3D" id="2.60.11.10">
    <property type="entry name" value="Cytochrome c oxidase, subunit Vb"/>
    <property type="match status" value="1"/>
</dbReference>
<dbReference type="InterPro" id="IPR002124">
    <property type="entry name" value="Cyt_c_oxidase_su5b"/>
</dbReference>
<dbReference type="InterPro" id="IPR036972">
    <property type="entry name" value="Cyt_c_oxidase_su5b_sf"/>
</dbReference>
<dbReference type="PANTHER" id="PTHR10122">
    <property type="entry name" value="CYTOCHROME C OXIDASE SUBUNIT 5B, MITOCHONDRIAL"/>
    <property type="match status" value="1"/>
</dbReference>
<dbReference type="PANTHER" id="PTHR10122:SF20">
    <property type="entry name" value="CYTOCHROME C OXIDASE SUBUNIT 5B, MITOCHONDRIAL"/>
    <property type="match status" value="1"/>
</dbReference>
<dbReference type="Pfam" id="PF01215">
    <property type="entry name" value="COX5B"/>
    <property type="match status" value="1"/>
</dbReference>
<dbReference type="SUPFAM" id="SSF57802">
    <property type="entry name" value="Rubredoxin-like"/>
    <property type="match status" value="1"/>
</dbReference>
<dbReference type="PROSITE" id="PS00848">
    <property type="entry name" value="COX5B_1"/>
    <property type="match status" value="1"/>
</dbReference>
<dbReference type="PROSITE" id="PS51359">
    <property type="entry name" value="COX5B_2"/>
    <property type="match status" value="1"/>
</dbReference>
<organism>
    <name type="scientific">Bos taurus</name>
    <name type="common">Bovine</name>
    <dbReference type="NCBI Taxonomy" id="9913"/>
    <lineage>
        <taxon>Eukaryota</taxon>
        <taxon>Metazoa</taxon>
        <taxon>Chordata</taxon>
        <taxon>Craniata</taxon>
        <taxon>Vertebrata</taxon>
        <taxon>Euteleostomi</taxon>
        <taxon>Mammalia</taxon>
        <taxon>Eutheria</taxon>
        <taxon>Laurasiatheria</taxon>
        <taxon>Artiodactyla</taxon>
        <taxon>Ruminantia</taxon>
        <taxon>Pecora</taxon>
        <taxon>Bovidae</taxon>
        <taxon>Bovinae</taxon>
        <taxon>Bos</taxon>
    </lineage>
</organism>
<accession>P00428</accession>
<accession>A6QL66</accession>
<accession>P11949</accession>
<accession>Q3T041</accession>
<keyword id="KW-0002">3D-structure</keyword>
<keyword id="KW-0007">Acetylation</keyword>
<keyword id="KW-0903">Direct protein sequencing</keyword>
<keyword id="KW-0472">Membrane</keyword>
<keyword id="KW-0479">Metal-binding</keyword>
<keyword id="KW-0496">Mitochondrion</keyword>
<keyword id="KW-0999">Mitochondrion inner membrane</keyword>
<keyword id="KW-1185">Reference proteome</keyword>
<keyword id="KW-0809">Transit peptide</keyword>
<keyword id="KW-0862">Zinc</keyword>
<gene>
    <name type="primary">COX5B</name>
</gene>
<name>COX5B_BOVIN</name>
<protein>
    <recommendedName>
        <fullName>Cytochrome c oxidase subunit 5B, mitochondrial</fullName>
    </recommendedName>
    <alternativeName>
        <fullName>Cytochrome c oxidase polypeptide VIa</fullName>
    </alternativeName>
    <alternativeName>
        <fullName>Cytochrome c oxidase polypeptide Vb</fullName>
    </alternativeName>
</protein>
<reference key="1">
    <citation type="submission" date="2007-06" db="EMBL/GenBank/DDBJ databases">
        <authorList>
            <consortium name="NIH - Mammalian Gene Collection (MGC) project"/>
        </authorList>
    </citation>
    <scope>NUCLEOTIDE SEQUENCE [LARGE SCALE MRNA]</scope>
    <source>
        <strain>Crossbred X Angus</strain>
        <strain>Hereford</strain>
        <tissue>Heart ventricle</tissue>
        <tissue>Ileum</tissue>
    </source>
</reference>
<reference key="2">
    <citation type="journal article" date="1982" name="Hoppe-Seyler's Z. Physiol. Chem.">
        <title>Studies on cytochrome c oxidase, IX. The primary structure of polypeptide VIa.</title>
        <authorList>
            <person name="Biewald R."/>
            <person name="Buse G."/>
        </authorList>
    </citation>
    <scope>PROTEIN SEQUENCE OF 32-129</scope>
</reference>
<reference key="3">
    <citation type="journal article" date="1988" name="Biochemistry">
        <title>Tissue-specific differences between heart and liver cytochrome c oxidase.</title>
        <authorList>
            <person name="Yanamura W."/>
            <person name="Zhang Y.-Z."/>
            <person name="Takamiya S."/>
            <person name="Capaldi R.A."/>
        </authorList>
    </citation>
    <scope>PROTEIN SEQUENCE OF 32-57</scope>
    <source>
        <tissue>Liver</tissue>
    </source>
</reference>
<reference key="4">
    <citation type="journal article" date="1988" name="Gene">
        <title>Sequence of cDNAs encoding subunit Vb of human and bovine cytochrome c oxidase.</title>
        <authorList>
            <person name="Zeviani M."/>
            <person name="Sakoda S."/>
            <person name="Sherbany A."/>
            <person name="Nakase H."/>
            <person name="Rizzuto R."/>
            <person name="Samitt C.E."/>
            <person name="Dimauro S."/>
            <person name="Schon E.A."/>
        </authorList>
    </citation>
    <scope>NUCLEOTIDE SEQUENCE [MRNA] OF 51-129</scope>
</reference>
<reference key="5">
    <citation type="journal article" date="2016" name="J. Biol. Chem.">
        <title>Purification of active respiratory supercomplex from bovine heart mitochondria enables functional studies.</title>
        <authorList>
            <person name="Shinzawa-Itoh K."/>
            <person name="Shimomura H."/>
            <person name="Yanagisawa S."/>
            <person name="Shimada S."/>
            <person name="Takahashi R."/>
            <person name="Oosaki M."/>
            <person name="Ogura T."/>
            <person name="Tsukihara T."/>
        </authorList>
    </citation>
    <scope>SUBUNIT</scope>
</reference>
<reference key="6">
    <citation type="journal article" date="1996" name="Science">
        <title>The whole structure of the 13-subunit oxidized cytochrome c oxidase at 2.8 A.</title>
        <authorList>
            <person name="Tsukihara T."/>
            <person name="Aoyama H."/>
            <person name="Yamashita E."/>
            <person name="Tomizaki T."/>
            <person name="Yamaguchi H."/>
            <person name="Shinzawa-Itoh K."/>
            <person name="Nakashima R."/>
            <person name="Yaono R."/>
            <person name="Yoshikawa S."/>
        </authorList>
    </citation>
    <scope>X-RAY CRYSTALLOGRAPHY (2.8 ANGSTROMS) IN COMPLEX WITH ZINC</scope>
</reference>
<reference key="7">
    <citation type="journal article" date="1999" name="Acta Crystallogr. D">
        <title>Structure analysis of bovine heart cytochrome c oxidase at 2.8 A resolution.</title>
        <authorList>
            <person name="Tomizaki T."/>
            <person name="Yamashita E."/>
            <person name="Yamaguchi H."/>
            <person name="Aoyama H."/>
            <person name="Tsukihara T."/>
            <person name="Shinzawa-Itoh K."/>
            <person name="Nakashima R."/>
            <person name="Yaono R."/>
            <person name="Yoshikawa S."/>
        </authorList>
    </citation>
    <scope>X-RAY CRYSTALLOGRAPHY (2.8 ANGSTROMS)</scope>
    <source>
        <tissue>Heart</tissue>
    </source>
</reference>
<reference key="8">
    <citation type="journal article" date="2000" name="Acta Crystallogr. D">
        <title>X-ray structure of azide-bound fully oxidized cytochrome c oxidase from bovine heart at 2.9 A resolution.</title>
        <authorList>
            <person name="Fei M.J."/>
            <person name="Yamashita E."/>
            <person name="Inoue N."/>
            <person name="Yao M."/>
            <person name="Yamaguchi H."/>
            <person name="Tsukihara T."/>
            <person name="Shinzawa-Itoh K."/>
            <person name="Nakashima R."/>
            <person name="Yoshikawa S."/>
        </authorList>
    </citation>
    <scope>X-RAY CRYSTALLOGRAPHY (2.9 ANGSTROMS)</scope>
    <source>
        <tissue>Heart</tissue>
    </source>
</reference>
<reference key="9">
    <citation type="journal article" date="2010" name="Proc. Natl. Acad. Sci. U.S.A.">
        <title>Bovine cytochrome c oxidase structures enable O2 reduction with minimization of reactive oxygens and provide a proton-pumping gate.</title>
        <authorList>
            <person name="Muramoto K."/>
            <person name="Ohta K."/>
            <person name="Shinzawa-Itoh K."/>
            <person name="Kanda K."/>
            <person name="Taniguchi M."/>
            <person name="Nabekura H."/>
            <person name="Yamashita E."/>
            <person name="Tsukihara T."/>
            <person name="Yoshikawa S."/>
        </authorList>
    </citation>
    <scope>X-RAY CRYSTALLOGRAPHY (1.80 ANGSTROMS) IN COMPLEX WITH ZINC</scope>
</reference>
<reference key="10">
    <citation type="journal article" date="2016" name="Elife">
        <title>Functional asymmetry and electron flow in the bovine respirasome.</title>
        <authorList>
            <person name="Sousa J.S."/>
            <person name="Mills D.J."/>
            <person name="Vonck J."/>
            <person name="Kuehlbrandt W."/>
        </authorList>
    </citation>
    <scope>STRUCTURE BY ELECTRON MICROSCOPY (9.10 ANGSTROMS)</scope>
</reference>
<reference key="11">
    <citation type="journal article" date="2016" name="J. Biol. Chem.">
        <title>The Mg2+-containing water cluster of mammalian cytochrome c oxidase collects four pumping proton equivalents in each catalytic cycle.</title>
        <authorList>
            <person name="Yano N."/>
            <person name="Muramoto K."/>
            <person name="Shimada A."/>
            <person name="Takemura S."/>
            <person name="Baba J."/>
            <person name="Fujisawa H."/>
            <person name="Mochizuki M."/>
            <person name="Shinzawa-Itoh K."/>
            <person name="Yamashita E."/>
            <person name="Tsukihara T."/>
            <person name="Yoshikawa S."/>
        </authorList>
    </citation>
    <scope>X-RAY CRYSTALLOGRAPHY (1.50 ANGSTROMS) IN COMPLEX WITH ZINC</scope>
</reference>
<reference key="12">
    <citation type="journal article" date="2019" name="Proc. Natl. Acad. Sci. U.S.A.">
        <title>Monomeric structure of an active form of bovine cytochrome c oxidase.</title>
        <authorList>
            <person name="Shinzawa-Itoh K."/>
            <person name="Sugimura T."/>
            <person name="Misaki T."/>
            <person name="Tadehara Y."/>
            <person name="Yamamoto S."/>
            <person name="Hanada M."/>
            <person name="Yano N."/>
            <person name="Nakagawa T."/>
            <person name="Uene S."/>
            <person name="Yamada T."/>
            <person name="Aoyama H."/>
            <person name="Yamashita E."/>
            <person name="Tsukihara T."/>
            <person name="Yoshikawa S."/>
            <person name="Muramoto K."/>
        </authorList>
    </citation>
    <scope>X-RAY CRYSTALLOGRAPHY (1.85 ANGSTROMS)</scope>
</reference>
<comment type="function">
    <text evidence="1">Component of the cytochrome c oxidase, the last enzyme in the mitochondrial electron transport chain which drives oxidative phosphorylation. The respiratory chain contains 3 multisubunit complexes succinate dehydrogenase (complex II, CII), ubiquinol-cytochrome c oxidoreductase (cytochrome b-c1 complex, complex III, CIII) and cytochrome c oxidase (complex IV, CIV), that cooperate to transfer electrons derived from NADH and succinate to molecular oxygen, creating an electrochemical gradient over the inner membrane that drives transmembrane transport and the ATP synthase. Cytochrome c oxidase is the component of the respiratory chain that catalyzes the reduction of oxygen to water. Electrons originating from reduced cytochrome c in the intermembrane space (IMS) are transferred via the dinuclear copper A center (CU(A)) of subunit 2 and heme A of subunit 1 to the active site in subunit 1, a binuclear center (BNC) formed by heme A3 and copper B (CU(B)). The BNC reduces molecular oxygen to 2 water molecules using 4 electrons from cytochrome c in the IMS and 4 protons from the mitochondrial matrix.</text>
</comment>
<comment type="pathway">
    <text evidence="1">Energy metabolism; oxidative phosphorylation.</text>
</comment>
<comment type="subunit">
    <text evidence="4 6 10">Component of the cytochrome c oxidase (complex IV, CIV), a multisubunit enzyme composed of 14 subunits. The complex is composed of a catalytic core of 3 subunits MT-CO1, MT-CO2 and MT-CO3, encoded in the mitochondrial DNA, and 11 supernumerary subunits COX4I1 (or COX4I2), COX5A, COX5B, COX6A2 (or COX6A1), COX6B1 (or COX6B2), COX6C, COX7A1 (or COX7A2), COX7B, COX7C, COX8B and NDUFA4, which are encoded in the nuclear genome (PubMed:8638158). The complex exists as a monomer or a dimer and forms supercomplexes (SCs) in the inner mitochondrial membrane with NADH-ubiquinone oxidoreductase (complex I, CI) and ubiquinol-cytochrome c oxidoreductase (cytochrome b-c1 complex, complex III, CIII), resulting in different assemblies (supercomplex SCI(1)III(2)IV(1) and megacomplex MCI(2)III(2)IV(2)) (PubMed:26698328, PubMed:27830641).</text>
</comment>
<comment type="subcellular location">
    <subcellularLocation>
        <location evidence="5 8">Mitochondrion inner membrane</location>
        <topology evidence="5 8">Peripheral membrane protein</topology>
        <orientation evidence="5 8">Matrix side</orientation>
    </subcellularLocation>
</comment>
<comment type="similarity">
    <text evidence="11">Belongs to the cytochrome c oxidase subunit 5B family.</text>
</comment>
<comment type="sequence caution" evidence="11">
    <conflict type="erroneous initiation">
        <sequence resource="EMBL-CDS" id="AAA30465"/>
    </conflict>
</comment>